<reference key="1">
    <citation type="journal article" date="2006" name="Proc. Natl. Acad. Sci. U.S.A.">
        <title>The complete genome sequence of Lactobacillus bulgaricus reveals extensive and ongoing reductive evolution.</title>
        <authorList>
            <person name="van de Guchte M."/>
            <person name="Penaud S."/>
            <person name="Grimaldi C."/>
            <person name="Barbe V."/>
            <person name="Bryson K."/>
            <person name="Nicolas P."/>
            <person name="Robert C."/>
            <person name="Oztas S."/>
            <person name="Mangenot S."/>
            <person name="Couloux A."/>
            <person name="Loux V."/>
            <person name="Dervyn R."/>
            <person name="Bossy R."/>
            <person name="Bolotin A."/>
            <person name="Batto J.-M."/>
            <person name="Walunas T."/>
            <person name="Gibrat J.-F."/>
            <person name="Bessieres P."/>
            <person name="Weissenbach J."/>
            <person name="Ehrlich S.D."/>
            <person name="Maguin E."/>
        </authorList>
    </citation>
    <scope>NUCLEOTIDE SEQUENCE [LARGE SCALE GENOMIC DNA]</scope>
    <source>
        <strain>ATCC 11842 / DSM 20081 / BCRC 10696 / JCM 1002 / NBRC 13953 / NCIMB 11778 / NCTC 12712 / WDCM 00102 / Lb 14</strain>
    </source>
</reference>
<accession>Q1G8P4</accession>
<evidence type="ECO:0000255" key="1">
    <source>
        <dbReference type="HAMAP-Rule" id="MF_00023"/>
    </source>
</evidence>
<proteinExistence type="inferred from homology"/>
<name>SSRP_LACDA</name>
<organism>
    <name type="scientific">Lactobacillus delbrueckii subsp. bulgaricus (strain ATCC 11842 / DSM 20081 / BCRC 10696 / JCM 1002 / NBRC 13953 / NCIMB 11778 / NCTC 12712 / WDCM 00102 / Lb 14)</name>
    <dbReference type="NCBI Taxonomy" id="390333"/>
    <lineage>
        <taxon>Bacteria</taxon>
        <taxon>Bacillati</taxon>
        <taxon>Bacillota</taxon>
        <taxon>Bacilli</taxon>
        <taxon>Lactobacillales</taxon>
        <taxon>Lactobacillaceae</taxon>
        <taxon>Lactobacillus</taxon>
    </lineage>
</organism>
<keyword id="KW-0963">Cytoplasm</keyword>
<keyword id="KW-1185">Reference proteome</keyword>
<keyword id="KW-0694">RNA-binding</keyword>
<protein>
    <recommendedName>
        <fullName evidence="1">SsrA-binding protein</fullName>
    </recommendedName>
    <alternativeName>
        <fullName evidence="1">Small protein B</fullName>
    </alternativeName>
</protein>
<comment type="function">
    <text evidence="1">Required for rescue of stalled ribosomes mediated by trans-translation. Binds to transfer-messenger RNA (tmRNA), required for stable association of tmRNA with ribosomes. tmRNA and SmpB together mimic tRNA shape, replacing the anticodon stem-loop with SmpB. tmRNA is encoded by the ssrA gene; the 2 termini fold to resemble tRNA(Ala) and it encodes a 'tag peptide', a short internal open reading frame. During trans-translation Ala-aminoacylated tmRNA acts like a tRNA, entering the A-site of stalled ribosomes, displacing the stalled mRNA. The ribosome then switches to translate the ORF on the tmRNA; the nascent peptide is terminated with the 'tag peptide' encoded by the tmRNA and targeted for degradation. The ribosome is freed to recommence translation, which seems to be the essential function of trans-translation.</text>
</comment>
<comment type="subcellular location">
    <subcellularLocation>
        <location evidence="1">Cytoplasm</location>
    </subcellularLocation>
    <text evidence="1">The tmRNA-SmpB complex associates with stalled 70S ribosomes.</text>
</comment>
<comment type="similarity">
    <text evidence="1">Belongs to the SmpB family.</text>
</comment>
<gene>
    <name evidence="1" type="primary">smpB</name>
    <name type="ordered locus">Ldb1832</name>
</gene>
<dbReference type="EMBL" id="CR954253">
    <property type="protein sequence ID" value="CAI98601.1"/>
    <property type="molecule type" value="Genomic_DNA"/>
</dbReference>
<dbReference type="RefSeq" id="WP_003611142.1">
    <property type="nucleotide sequence ID" value="NZ_JQAV01000021.1"/>
</dbReference>
<dbReference type="SMR" id="Q1G8P4"/>
<dbReference type="STRING" id="390333.Ldb1832"/>
<dbReference type="KEGG" id="ldb:Ldb1832"/>
<dbReference type="PATRIC" id="fig|390333.13.peg.1075"/>
<dbReference type="eggNOG" id="COG0691">
    <property type="taxonomic scope" value="Bacteria"/>
</dbReference>
<dbReference type="HOGENOM" id="CLU_108953_0_0_9"/>
<dbReference type="BioCyc" id="LDEL390333:LDB_RS07945-MONOMER"/>
<dbReference type="Proteomes" id="UP000001259">
    <property type="component" value="Chromosome"/>
</dbReference>
<dbReference type="GO" id="GO:0005829">
    <property type="term" value="C:cytosol"/>
    <property type="evidence" value="ECO:0007669"/>
    <property type="project" value="TreeGrafter"/>
</dbReference>
<dbReference type="GO" id="GO:0003723">
    <property type="term" value="F:RNA binding"/>
    <property type="evidence" value="ECO:0007669"/>
    <property type="project" value="UniProtKB-UniRule"/>
</dbReference>
<dbReference type="GO" id="GO:0070929">
    <property type="term" value="P:trans-translation"/>
    <property type="evidence" value="ECO:0007669"/>
    <property type="project" value="UniProtKB-UniRule"/>
</dbReference>
<dbReference type="CDD" id="cd09294">
    <property type="entry name" value="SmpB"/>
    <property type="match status" value="1"/>
</dbReference>
<dbReference type="Gene3D" id="2.40.280.10">
    <property type="match status" value="1"/>
</dbReference>
<dbReference type="HAMAP" id="MF_00023">
    <property type="entry name" value="SmpB"/>
    <property type="match status" value="1"/>
</dbReference>
<dbReference type="InterPro" id="IPR023620">
    <property type="entry name" value="SmpB"/>
</dbReference>
<dbReference type="InterPro" id="IPR000037">
    <property type="entry name" value="SsrA-bd_prot"/>
</dbReference>
<dbReference type="InterPro" id="IPR020081">
    <property type="entry name" value="SsrA-bd_prot_CS"/>
</dbReference>
<dbReference type="NCBIfam" id="NF003843">
    <property type="entry name" value="PRK05422.1"/>
    <property type="match status" value="1"/>
</dbReference>
<dbReference type="NCBIfam" id="TIGR00086">
    <property type="entry name" value="smpB"/>
    <property type="match status" value="1"/>
</dbReference>
<dbReference type="PANTHER" id="PTHR30308:SF2">
    <property type="entry name" value="SSRA-BINDING PROTEIN"/>
    <property type="match status" value="1"/>
</dbReference>
<dbReference type="PANTHER" id="PTHR30308">
    <property type="entry name" value="TMRNA-BINDING COMPONENT OF TRANS-TRANSLATION TAGGING COMPLEX"/>
    <property type="match status" value="1"/>
</dbReference>
<dbReference type="Pfam" id="PF01668">
    <property type="entry name" value="SmpB"/>
    <property type="match status" value="1"/>
</dbReference>
<dbReference type="SUPFAM" id="SSF74982">
    <property type="entry name" value="Small protein B (SmpB)"/>
    <property type="match status" value="1"/>
</dbReference>
<dbReference type="PROSITE" id="PS01317">
    <property type="entry name" value="SSRP"/>
    <property type="match status" value="1"/>
</dbReference>
<sequence length="153" mass="17916">MKQKAKDENVLAQNRQARHDYFIKDTYEAGIALTGTEIKSVRARHVTLRDGYVQIINGSAFLENVHIDEYKEGNRYNHDPLRSRRLLLHKKEIAKLADVKAQKGMTIVPLKVYLKHGFAKVLIGVAQGKKEYDKRETIKKRDQDRELRRKYRI</sequence>
<feature type="chain" id="PRO_0000331055" description="SsrA-binding protein">
    <location>
        <begin position="1"/>
        <end position="153"/>
    </location>
</feature>